<proteinExistence type="inferred from homology"/>
<evidence type="ECO:0000255" key="1">
    <source>
        <dbReference type="HAMAP-Rule" id="MF_00177"/>
    </source>
</evidence>
<organism>
    <name type="scientific">Roseobacter denitrificans (strain ATCC 33942 / OCh 114)</name>
    <name type="common">Erythrobacter sp. (strain OCh 114)</name>
    <name type="synonym">Roseobacter denitrificans</name>
    <dbReference type="NCBI Taxonomy" id="375451"/>
    <lineage>
        <taxon>Bacteria</taxon>
        <taxon>Pseudomonadati</taxon>
        <taxon>Pseudomonadota</taxon>
        <taxon>Alphaproteobacteria</taxon>
        <taxon>Rhodobacterales</taxon>
        <taxon>Roseobacteraceae</taxon>
        <taxon>Roseobacter</taxon>
    </lineage>
</organism>
<keyword id="KW-0030">Aminoacyl-tRNA synthetase</keyword>
<keyword id="KW-0067">ATP-binding</keyword>
<keyword id="KW-0963">Cytoplasm</keyword>
<keyword id="KW-0436">Ligase</keyword>
<keyword id="KW-0547">Nucleotide-binding</keyword>
<keyword id="KW-0648">Protein biosynthesis</keyword>
<keyword id="KW-1185">Reference proteome</keyword>
<dbReference type="EC" id="6.1.1.6" evidence="1"/>
<dbReference type="EMBL" id="CP000362">
    <property type="protein sequence ID" value="ABG30893.1"/>
    <property type="molecule type" value="Genomic_DNA"/>
</dbReference>
<dbReference type="RefSeq" id="WP_011567513.1">
    <property type="nucleotide sequence ID" value="NC_008209.1"/>
</dbReference>
<dbReference type="SMR" id="Q16AV0"/>
<dbReference type="STRING" id="375451.RD1_1246"/>
<dbReference type="KEGG" id="rde:RD1_1246"/>
<dbReference type="eggNOG" id="COG1384">
    <property type="taxonomic scope" value="Bacteria"/>
</dbReference>
<dbReference type="HOGENOM" id="CLU_025562_2_0_5"/>
<dbReference type="OrthoDB" id="9803151at2"/>
<dbReference type="Proteomes" id="UP000007029">
    <property type="component" value="Chromosome"/>
</dbReference>
<dbReference type="GO" id="GO:0005737">
    <property type="term" value="C:cytoplasm"/>
    <property type="evidence" value="ECO:0007669"/>
    <property type="project" value="UniProtKB-SubCell"/>
</dbReference>
<dbReference type="GO" id="GO:0005524">
    <property type="term" value="F:ATP binding"/>
    <property type="evidence" value="ECO:0007669"/>
    <property type="project" value="UniProtKB-UniRule"/>
</dbReference>
<dbReference type="GO" id="GO:0004824">
    <property type="term" value="F:lysine-tRNA ligase activity"/>
    <property type="evidence" value="ECO:0007669"/>
    <property type="project" value="UniProtKB-UniRule"/>
</dbReference>
<dbReference type="GO" id="GO:0000049">
    <property type="term" value="F:tRNA binding"/>
    <property type="evidence" value="ECO:0007669"/>
    <property type="project" value="InterPro"/>
</dbReference>
<dbReference type="GO" id="GO:0006430">
    <property type="term" value="P:lysyl-tRNA aminoacylation"/>
    <property type="evidence" value="ECO:0007669"/>
    <property type="project" value="UniProtKB-UniRule"/>
</dbReference>
<dbReference type="Gene3D" id="1.10.10.350">
    <property type="match status" value="1"/>
</dbReference>
<dbReference type="Gene3D" id="3.40.50.620">
    <property type="entry name" value="HUPs"/>
    <property type="match status" value="2"/>
</dbReference>
<dbReference type="HAMAP" id="MF_00177">
    <property type="entry name" value="Lys_tRNA_synth_class1"/>
    <property type="match status" value="1"/>
</dbReference>
<dbReference type="InterPro" id="IPR020751">
    <property type="entry name" value="aa-tRNA-synth_I_codon-bd_sub2"/>
</dbReference>
<dbReference type="InterPro" id="IPR001412">
    <property type="entry name" value="aa-tRNA-synth_I_CS"/>
</dbReference>
<dbReference type="InterPro" id="IPR008925">
    <property type="entry name" value="aa_tRNA-synth_I_cd-bd_sf"/>
</dbReference>
<dbReference type="InterPro" id="IPR002904">
    <property type="entry name" value="Lys-tRNA-ligase"/>
</dbReference>
<dbReference type="InterPro" id="IPR014729">
    <property type="entry name" value="Rossmann-like_a/b/a_fold"/>
</dbReference>
<dbReference type="NCBIfam" id="TIGR00467">
    <property type="entry name" value="lysS_arch"/>
    <property type="match status" value="1"/>
</dbReference>
<dbReference type="NCBIfam" id="NF001968">
    <property type="entry name" value="PRK00750.1-2"/>
    <property type="match status" value="1"/>
</dbReference>
<dbReference type="PANTHER" id="PTHR37940">
    <property type="entry name" value="LYSINE--TRNA LIGASE"/>
    <property type="match status" value="1"/>
</dbReference>
<dbReference type="PANTHER" id="PTHR37940:SF1">
    <property type="entry name" value="LYSINE--TRNA LIGASE"/>
    <property type="match status" value="1"/>
</dbReference>
<dbReference type="Pfam" id="PF01921">
    <property type="entry name" value="tRNA-synt_1f"/>
    <property type="match status" value="1"/>
</dbReference>
<dbReference type="SUPFAM" id="SSF48163">
    <property type="entry name" value="An anticodon-binding domain of class I aminoacyl-tRNA synthetases"/>
    <property type="match status" value="1"/>
</dbReference>
<dbReference type="SUPFAM" id="SSF52374">
    <property type="entry name" value="Nucleotidylyl transferase"/>
    <property type="match status" value="1"/>
</dbReference>
<dbReference type="PROSITE" id="PS00178">
    <property type="entry name" value="AA_TRNA_LIGASE_I"/>
    <property type="match status" value="1"/>
</dbReference>
<sequence length="527" mass="59384">MSDTRTAAMTSKAWPFEEARRVLKRYEKNPPEKGYVLFETGYGPSGLPHIGTFGEVARTSMVMRAFQEISDIPTRLICFSDDLDGMRKVPGNVPNPDALTEHLQRPLTSVPDPFGTHASFGAHNNAMLRRFLDTFGFEYEFISATEFYNTGQFDEILLRAAAKYDEIMAVMLKSLREERRQTYSIFLPIHPESGRVMYVPMKEVNAQAGTITFDSEDGEEMTLPVTGGAVKLQWKPDFGARWAALGVDFEMYGKDHSTNTPIYDKICRILGQRPPEHFTYELFLDENGQKISKSSGNGVSIDEWLTYASTESLSYFMYQKPKTAKRMYFDVIPKAVDEYHQQLRAYAGQDTAQRLNNPVWHIHGGDVPASNMLVPFSMLLNLASVSSAEDKSQLWGFIQRYAPESNPENNPDMDAAADFAVRYFNDFVKPKKVYRAASDLEREALEDLRDQLKAYDGPVDDEALQSIVYACGRERFDPLRGWFTALYEVLLGASQGPRFGGFIALYGVQETVALIDAALAGELLSDD</sequence>
<gene>
    <name evidence="1" type="primary">lysS</name>
    <name type="ordered locus">RD1_1246</name>
</gene>
<accession>Q16AV0</accession>
<protein>
    <recommendedName>
        <fullName evidence="1">Lysine--tRNA ligase</fullName>
        <ecNumber evidence="1">6.1.1.6</ecNumber>
    </recommendedName>
    <alternativeName>
        <fullName evidence="1">Lysyl-tRNA synthetase</fullName>
        <shortName evidence="1">LysRS</shortName>
    </alternativeName>
</protein>
<comment type="catalytic activity">
    <reaction evidence="1">
        <text>tRNA(Lys) + L-lysine + ATP = L-lysyl-tRNA(Lys) + AMP + diphosphate</text>
        <dbReference type="Rhea" id="RHEA:20792"/>
        <dbReference type="Rhea" id="RHEA-COMP:9696"/>
        <dbReference type="Rhea" id="RHEA-COMP:9697"/>
        <dbReference type="ChEBI" id="CHEBI:30616"/>
        <dbReference type="ChEBI" id="CHEBI:32551"/>
        <dbReference type="ChEBI" id="CHEBI:33019"/>
        <dbReference type="ChEBI" id="CHEBI:78442"/>
        <dbReference type="ChEBI" id="CHEBI:78529"/>
        <dbReference type="ChEBI" id="CHEBI:456215"/>
        <dbReference type="EC" id="6.1.1.6"/>
    </reaction>
</comment>
<comment type="subcellular location">
    <subcellularLocation>
        <location evidence="1">Cytoplasm</location>
    </subcellularLocation>
</comment>
<comment type="similarity">
    <text evidence="1">Belongs to the class-I aminoacyl-tRNA synthetase family.</text>
</comment>
<reference key="1">
    <citation type="journal article" date="2007" name="J. Bacteriol.">
        <title>The complete genome sequence of Roseobacter denitrificans reveals a mixotrophic rather than photosynthetic metabolism.</title>
        <authorList>
            <person name="Swingley W.D."/>
            <person name="Sadekar S."/>
            <person name="Mastrian S.D."/>
            <person name="Matthies H.J."/>
            <person name="Hao J."/>
            <person name="Ramos H."/>
            <person name="Acharya C.R."/>
            <person name="Conrad A.L."/>
            <person name="Taylor H.L."/>
            <person name="Dejesa L.C."/>
            <person name="Shah M.K."/>
            <person name="O'Huallachain M.E."/>
            <person name="Lince M.T."/>
            <person name="Blankenship R.E."/>
            <person name="Beatty J.T."/>
            <person name="Touchman J.W."/>
        </authorList>
    </citation>
    <scope>NUCLEOTIDE SEQUENCE [LARGE SCALE GENOMIC DNA]</scope>
    <source>
        <strain>ATCC 33942 / OCh 114</strain>
    </source>
</reference>
<feature type="chain" id="PRO_1000040354" description="Lysine--tRNA ligase">
    <location>
        <begin position="1"/>
        <end position="527"/>
    </location>
</feature>
<feature type="short sequence motif" description="'HIGH' region">
    <location>
        <begin position="44"/>
        <end position="52"/>
    </location>
</feature>
<feature type="short sequence motif" description="'KMSKS' region">
    <location>
        <begin position="290"/>
        <end position="294"/>
    </location>
</feature>
<feature type="binding site" evidence="1">
    <location>
        <position position="293"/>
    </location>
    <ligand>
        <name>ATP</name>
        <dbReference type="ChEBI" id="CHEBI:30616"/>
    </ligand>
</feature>
<name>SYK_ROSDO</name>